<keyword id="KW-1003">Cell membrane</keyword>
<keyword id="KW-0472">Membrane</keyword>
<keyword id="KW-1185">Reference proteome</keyword>
<comment type="function">
    <text evidence="1">Could be involved in insertion of integral membrane proteins into the membrane.</text>
</comment>
<comment type="subcellular location">
    <subcellularLocation>
        <location evidence="1">Cell membrane</location>
        <topology evidence="1">Peripheral membrane protein</topology>
        <orientation evidence="1">Cytoplasmic side</orientation>
    </subcellularLocation>
</comment>
<comment type="similarity">
    <text evidence="1">Belongs to the UPF0161 family.</text>
</comment>
<name>YIDD_MYCTO</name>
<feature type="chain" id="PRO_0000428516" description="Putative membrane protein insertion efficiency factor">
    <location>
        <begin position="1"/>
        <end position="120"/>
    </location>
</feature>
<feature type="region of interest" description="Disordered" evidence="2">
    <location>
        <begin position="93"/>
        <end position="120"/>
    </location>
</feature>
<accession>P9WFL8</accession>
<accession>L0TH14</accession>
<accession>O53600</accession>
<accession>P67300</accession>
<sequence>MSLSRQSCGRVVRVTGRASARGLIFVIQVYRHMLSPLRPASCRFVPTCSQYAVDALTEYGLLRGSWLTMIRLAKCGPWHRGGWDPIPEGLTTGRSCQTDVDGANDDWNPASKRGERESFV</sequence>
<protein>
    <recommendedName>
        <fullName evidence="1">Putative membrane protein insertion efficiency factor</fullName>
    </recommendedName>
</protein>
<reference key="1">
    <citation type="journal article" date="2002" name="J. Bacteriol.">
        <title>Whole-genome comparison of Mycobacterium tuberculosis clinical and laboratory strains.</title>
        <authorList>
            <person name="Fleischmann R.D."/>
            <person name="Alland D."/>
            <person name="Eisen J.A."/>
            <person name="Carpenter L."/>
            <person name="White O."/>
            <person name="Peterson J.D."/>
            <person name="DeBoy R.T."/>
            <person name="Dodson R.J."/>
            <person name="Gwinn M.L."/>
            <person name="Haft D.H."/>
            <person name="Hickey E.K."/>
            <person name="Kolonay J.F."/>
            <person name="Nelson W.C."/>
            <person name="Umayam L.A."/>
            <person name="Ermolaeva M.D."/>
            <person name="Salzberg S.L."/>
            <person name="Delcher A."/>
            <person name="Utterback T.R."/>
            <person name="Weidman J.F."/>
            <person name="Khouri H.M."/>
            <person name="Gill J."/>
            <person name="Mikula A."/>
            <person name="Bishai W."/>
            <person name="Jacobs W.R. Jr."/>
            <person name="Venter J.C."/>
            <person name="Fraser C.M."/>
        </authorList>
    </citation>
    <scope>NUCLEOTIDE SEQUENCE [LARGE SCALE GENOMIC DNA]</scope>
    <source>
        <strain>CDC 1551 / Oshkosh</strain>
    </source>
</reference>
<organism>
    <name type="scientific">Mycobacterium tuberculosis (strain CDC 1551 / Oshkosh)</name>
    <dbReference type="NCBI Taxonomy" id="83331"/>
    <lineage>
        <taxon>Bacteria</taxon>
        <taxon>Bacillati</taxon>
        <taxon>Actinomycetota</taxon>
        <taxon>Actinomycetes</taxon>
        <taxon>Mycobacteriales</taxon>
        <taxon>Mycobacteriaceae</taxon>
        <taxon>Mycobacterium</taxon>
        <taxon>Mycobacterium tuberculosis complex</taxon>
    </lineage>
</organism>
<evidence type="ECO:0000255" key="1">
    <source>
        <dbReference type="HAMAP-Rule" id="MF_00386"/>
    </source>
</evidence>
<evidence type="ECO:0000256" key="2">
    <source>
        <dbReference type="SAM" id="MobiDB-lite"/>
    </source>
</evidence>
<dbReference type="EMBL" id="AE000516">
    <property type="protein sequence ID" value="AAK48407.1"/>
    <property type="molecule type" value="Genomic_DNA"/>
</dbReference>
<dbReference type="PIR" id="B70852">
    <property type="entry name" value="B70852"/>
</dbReference>
<dbReference type="KEGG" id="mtc:MT4040.1"/>
<dbReference type="HOGENOM" id="CLU_144811_2_1_11"/>
<dbReference type="Proteomes" id="UP000001020">
    <property type="component" value="Chromosome"/>
</dbReference>
<dbReference type="GO" id="GO:0005886">
    <property type="term" value="C:plasma membrane"/>
    <property type="evidence" value="ECO:0007669"/>
    <property type="project" value="UniProtKB-SubCell"/>
</dbReference>
<dbReference type="HAMAP" id="MF_00386">
    <property type="entry name" value="UPF0161_YidD"/>
    <property type="match status" value="1"/>
</dbReference>
<dbReference type="InterPro" id="IPR002696">
    <property type="entry name" value="Membr_insert_effic_factor_YidD"/>
</dbReference>
<dbReference type="NCBIfam" id="TIGR00278">
    <property type="entry name" value="membrane protein insertion efficiency factor YidD"/>
    <property type="match status" value="1"/>
</dbReference>
<dbReference type="PANTHER" id="PTHR33383">
    <property type="entry name" value="MEMBRANE PROTEIN INSERTION EFFICIENCY FACTOR-RELATED"/>
    <property type="match status" value="1"/>
</dbReference>
<dbReference type="PANTHER" id="PTHR33383:SF1">
    <property type="entry name" value="MEMBRANE PROTEIN INSERTION EFFICIENCY FACTOR-RELATED"/>
    <property type="match status" value="1"/>
</dbReference>
<dbReference type="Pfam" id="PF01809">
    <property type="entry name" value="YidD"/>
    <property type="match status" value="1"/>
</dbReference>
<dbReference type="SMART" id="SM01234">
    <property type="entry name" value="Haemolytic"/>
    <property type="match status" value="1"/>
</dbReference>
<gene>
    <name type="ordered locus">MT4040.1</name>
</gene>
<proteinExistence type="inferred from homology"/>